<proteinExistence type="inferred from homology"/>
<gene>
    <name evidence="1" type="primary">pfkA</name>
    <name type="synonym">pfk</name>
    <name type="ordered locus">lp_1898</name>
</gene>
<name>PFKA_LACPL</name>
<evidence type="ECO:0000255" key="1">
    <source>
        <dbReference type="HAMAP-Rule" id="MF_00339"/>
    </source>
</evidence>
<dbReference type="EC" id="2.7.1.11" evidence="1"/>
<dbReference type="EMBL" id="AL935263">
    <property type="protein sequence ID" value="CCC79163.1"/>
    <property type="molecule type" value="Genomic_DNA"/>
</dbReference>
<dbReference type="RefSeq" id="WP_003640604.1">
    <property type="nucleotide sequence ID" value="NC_004567.2"/>
</dbReference>
<dbReference type="RefSeq" id="YP_004889677.1">
    <property type="nucleotide sequence ID" value="NC_004567.2"/>
</dbReference>
<dbReference type="SMR" id="Q88VY1"/>
<dbReference type="STRING" id="220668.lp_1898"/>
<dbReference type="EnsemblBacteria" id="CCC79163">
    <property type="protein sequence ID" value="CCC79163"/>
    <property type="gene ID" value="lp_1898"/>
</dbReference>
<dbReference type="GeneID" id="89669222"/>
<dbReference type="KEGG" id="lpl:lp_1898"/>
<dbReference type="PATRIC" id="fig|220668.9.peg.1599"/>
<dbReference type="eggNOG" id="COG0205">
    <property type="taxonomic scope" value="Bacteria"/>
</dbReference>
<dbReference type="HOGENOM" id="CLU_020655_0_1_9"/>
<dbReference type="OrthoDB" id="9802503at2"/>
<dbReference type="PhylomeDB" id="Q88VY1"/>
<dbReference type="SABIO-RK" id="Q88VY1"/>
<dbReference type="UniPathway" id="UPA00109">
    <property type="reaction ID" value="UER00182"/>
</dbReference>
<dbReference type="Proteomes" id="UP000000432">
    <property type="component" value="Chromosome"/>
</dbReference>
<dbReference type="GO" id="GO:0005945">
    <property type="term" value="C:6-phosphofructokinase complex"/>
    <property type="evidence" value="ECO:0007669"/>
    <property type="project" value="TreeGrafter"/>
</dbReference>
<dbReference type="GO" id="GO:0003872">
    <property type="term" value="F:6-phosphofructokinase activity"/>
    <property type="evidence" value="ECO:0007669"/>
    <property type="project" value="UniProtKB-UniRule"/>
</dbReference>
<dbReference type="GO" id="GO:0016208">
    <property type="term" value="F:AMP binding"/>
    <property type="evidence" value="ECO:0007669"/>
    <property type="project" value="TreeGrafter"/>
</dbReference>
<dbReference type="GO" id="GO:0005524">
    <property type="term" value="F:ATP binding"/>
    <property type="evidence" value="ECO:0007669"/>
    <property type="project" value="UniProtKB-KW"/>
</dbReference>
<dbReference type="GO" id="GO:0070095">
    <property type="term" value="F:fructose-6-phosphate binding"/>
    <property type="evidence" value="ECO:0007669"/>
    <property type="project" value="TreeGrafter"/>
</dbReference>
<dbReference type="GO" id="GO:0042802">
    <property type="term" value="F:identical protein binding"/>
    <property type="evidence" value="ECO:0007669"/>
    <property type="project" value="TreeGrafter"/>
</dbReference>
<dbReference type="GO" id="GO:0046872">
    <property type="term" value="F:metal ion binding"/>
    <property type="evidence" value="ECO:0007669"/>
    <property type="project" value="UniProtKB-KW"/>
</dbReference>
<dbReference type="GO" id="GO:0048029">
    <property type="term" value="F:monosaccharide binding"/>
    <property type="evidence" value="ECO:0007669"/>
    <property type="project" value="TreeGrafter"/>
</dbReference>
<dbReference type="GO" id="GO:0061621">
    <property type="term" value="P:canonical glycolysis"/>
    <property type="evidence" value="ECO:0007669"/>
    <property type="project" value="TreeGrafter"/>
</dbReference>
<dbReference type="GO" id="GO:0030388">
    <property type="term" value="P:fructose 1,6-bisphosphate metabolic process"/>
    <property type="evidence" value="ECO:0007669"/>
    <property type="project" value="TreeGrafter"/>
</dbReference>
<dbReference type="GO" id="GO:0006002">
    <property type="term" value="P:fructose 6-phosphate metabolic process"/>
    <property type="evidence" value="ECO:0007669"/>
    <property type="project" value="InterPro"/>
</dbReference>
<dbReference type="FunFam" id="3.40.50.450:FF:000001">
    <property type="entry name" value="ATP-dependent 6-phosphofructokinase"/>
    <property type="match status" value="1"/>
</dbReference>
<dbReference type="FunFam" id="3.40.50.460:FF:000002">
    <property type="entry name" value="ATP-dependent 6-phosphofructokinase"/>
    <property type="match status" value="1"/>
</dbReference>
<dbReference type="Gene3D" id="3.40.50.450">
    <property type="match status" value="1"/>
</dbReference>
<dbReference type="Gene3D" id="3.40.50.460">
    <property type="entry name" value="Phosphofructokinase domain"/>
    <property type="match status" value="1"/>
</dbReference>
<dbReference type="HAMAP" id="MF_00339">
    <property type="entry name" value="Phosphofructokinase_I_B1"/>
    <property type="match status" value="1"/>
</dbReference>
<dbReference type="InterPro" id="IPR022953">
    <property type="entry name" value="ATP_PFK"/>
</dbReference>
<dbReference type="InterPro" id="IPR012003">
    <property type="entry name" value="ATP_PFK_prok-type"/>
</dbReference>
<dbReference type="InterPro" id="IPR012828">
    <property type="entry name" value="PFKA_ATP_prok"/>
</dbReference>
<dbReference type="InterPro" id="IPR015912">
    <property type="entry name" value="Phosphofructokinase_CS"/>
</dbReference>
<dbReference type="InterPro" id="IPR000023">
    <property type="entry name" value="Phosphofructokinase_dom"/>
</dbReference>
<dbReference type="InterPro" id="IPR035966">
    <property type="entry name" value="PKF_sf"/>
</dbReference>
<dbReference type="NCBIfam" id="TIGR02482">
    <property type="entry name" value="PFKA_ATP"/>
    <property type="match status" value="1"/>
</dbReference>
<dbReference type="NCBIfam" id="NF002872">
    <property type="entry name" value="PRK03202.1"/>
    <property type="match status" value="1"/>
</dbReference>
<dbReference type="PANTHER" id="PTHR13697:SF4">
    <property type="entry name" value="ATP-DEPENDENT 6-PHOSPHOFRUCTOKINASE"/>
    <property type="match status" value="1"/>
</dbReference>
<dbReference type="PANTHER" id="PTHR13697">
    <property type="entry name" value="PHOSPHOFRUCTOKINASE"/>
    <property type="match status" value="1"/>
</dbReference>
<dbReference type="Pfam" id="PF00365">
    <property type="entry name" value="PFK"/>
    <property type="match status" value="1"/>
</dbReference>
<dbReference type="PIRSF" id="PIRSF000532">
    <property type="entry name" value="ATP_PFK_prok"/>
    <property type="match status" value="1"/>
</dbReference>
<dbReference type="PRINTS" id="PR00476">
    <property type="entry name" value="PHFRCTKINASE"/>
</dbReference>
<dbReference type="SUPFAM" id="SSF53784">
    <property type="entry name" value="Phosphofructokinase"/>
    <property type="match status" value="1"/>
</dbReference>
<dbReference type="PROSITE" id="PS00433">
    <property type="entry name" value="PHOSPHOFRUCTOKINASE"/>
    <property type="match status" value="1"/>
</dbReference>
<comment type="function">
    <text evidence="1">Catalyzes the phosphorylation of D-fructose 6-phosphate to fructose 1,6-bisphosphate by ATP, the first committing step of glycolysis.</text>
</comment>
<comment type="catalytic activity">
    <reaction evidence="1">
        <text>beta-D-fructose 6-phosphate + ATP = beta-D-fructose 1,6-bisphosphate + ADP + H(+)</text>
        <dbReference type="Rhea" id="RHEA:16109"/>
        <dbReference type="ChEBI" id="CHEBI:15378"/>
        <dbReference type="ChEBI" id="CHEBI:30616"/>
        <dbReference type="ChEBI" id="CHEBI:32966"/>
        <dbReference type="ChEBI" id="CHEBI:57634"/>
        <dbReference type="ChEBI" id="CHEBI:456216"/>
        <dbReference type="EC" id="2.7.1.11"/>
    </reaction>
</comment>
<comment type="cofactor">
    <cofactor evidence="1">
        <name>Mg(2+)</name>
        <dbReference type="ChEBI" id="CHEBI:18420"/>
    </cofactor>
</comment>
<comment type="activity regulation">
    <text evidence="1">Allosterically activated by ADP and other diphosphonucleosides, and allosterically inhibited by phosphoenolpyruvate.</text>
</comment>
<comment type="pathway">
    <text evidence="1">Carbohydrate degradation; glycolysis; D-glyceraldehyde 3-phosphate and glycerone phosphate from D-glucose: step 3/4.</text>
</comment>
<comment type="subunit">
    <text evidence="1">Homotetramer.</text>
</comment>
<comment type="subcellular location">
    <subcellularLocation>
        <location evidence="1">Cytoplasm</location>
    </subcellularLocation>
</comment>
<comment type="similarity">
    <text evidence="1">Belongs to the phosphofructokinase type A (PFKA) family. ATP-dependent PFK group I subfamily. Prokaryotic clade 'B1' sub-subfamily.</text>
</comment>
<protein>
    <recommendedName>
        <fullName evidence="1">ATP-dependent 6-phosphofructokinase</fullName>
        <shortName evidence="1">ATP-PFK</shortName>
        <shortName evidence="1">Phosphofructokinase</shortName>
        <ecNumber evidence="1">2.7.1.11</ecNumber>
    </recommendedName>
    <alternativeName>
        <fullName evidence="1">Phosphohexokinase</fullName>
    </alternativeName>
</protein>
<keyword id="KW-0021">Allosteric enzyme</keyword>
<keyword id="KW-0067">ATP-binding</keyword>
<keyword id="KW-0963">Cytoplasm</keyword>
<keyword id="KW-0324">Glycolysis</keyword>
<keyword id="KW-0418">Kinase</keyword>
<keyword id="KW-0460">Magnesium</keyword>
<keyword id="KW-0479">Metal-binding</keyword>
<keyword id="KW-0547">Nucleotide-binding</keyword>
<keyword id="KW-1185">Reference proteome</keyword>
<keyword id="KW-0808">Transferase</keyword>
<feature type="chain" id="PRO_0000111959" description="ATP-dependent 6-phosphofructokinase">
    <location>
        <begin position="1"/>
        <end position="320"/>
    </location>
</feature>
<feature type="active site" description="Proton acceptor" evidence="1">
    <location>
        <position position="127"/>
    </location>
</feature>
<feature type="binding site" evidence="1">
    <location>
        <position position="11"/>
    </location>
    <ligand>
        <name>ATP</name>
        <dbReference type="ChEBI" id="CHEBI:30616"/>
    </ligand>
</feature>
<feature type="binding site" evidence="1">
    <location>
        <begin position="72"/>
        <end position="73"/>
    </location>
    <ligand>
        <name>ATP</name>
        <dbReference type="ChEBI" id="CHEBI:30616"/>
    </ligand>
</feature>
<feature type="binding site" evidence="1">
    <location>
        <begin position="102"/>
        <end position="105"/>
    </location>
    <ligand>
        <name>ATP</name>
        <dbReference type="ChEBI" id="CHEBI:30616"/>
    </ligand>
</feature>
<feature type="binding site" evidence="1">
    <location>
        <position position="103"/>
    </location>
    <ligand>
        <name>Mg(2+)</name>
        <dbReference type="ChEBI" id="CHEBI:18420"/>
        <note>catalytic</note>
    </ligand>
</feature>
<feature type="binding site" description="in other chain" evidence="1">
    <location>
        <begin position="125"/>
        <end position="127"/>
    </location>
    <ligand>
        <name>substrate</name>
        <note>ligand shared between dimeric partners</note>
    </ligand>
</feature>
<feature type="binding site" evidence="1">
    <location>
        <position position="162"/>
    </location>
    <ligand>
        <name>substrate</name>
        <note>ligand shared between dimeric partners</note>
    </ligand>
</feature>
<feature type="binding site" description="in other chain" evidence="1">
    <location>
        <begin position="169"/>
        <end position="171"/>
    </location>
    <ligand>
        <name>substrate</name>
        <note>ligand shared between dimeric partners</note>
    </ligand>
</feature>
<feature type="binding site" description="in other chain" evidence="1">
    <location>
        <position position="222"/>
    </location>
    <ligand>
        <name>substrate</name>
        <note>ligand shared between dimeric partners</note>
    </ligand>
</feature>
<feature type="binding site" evidence="1">
    <location>
        <position position="243"/>
    </location>
    <ligand>
        <name>substrate</name>
        <note>ligand shared between dimeric partners</note>
    </ligand>
</feature>
<feature type="binding site" description="in other chain" evidence="1">
    <location>
        <begin position="249"/>
        <end position="252"/>
    </location>
    <ligand>
        <name>substrate</name>
        <note>ligand shared between dimeric partners</note>
    </ligand>
</feature>
<accession>Q88VY1</accession>
<accession>F9UPM4</accession>
<sequence>MKRIGILTSGGDAPGMNAAVRAVAGKAMAEGLEAYGINYGFAGLVAGDIHKIEAADLDGVIQRGGTLLYSARYPEFAHEEGQLKGIEQLKRFGIDALVVIGGDGSYHGALRLTEHGYNTIGLPGTIDNDIPYTDFTIGFDTAVNTNVQALDRIYDTAHSHDRTFVVEVMGRGAGDVALWSGVSIGATAIVVPEVDWDMEEIANKIKHNRANGHRSNLIVLAEGVMGAQEFVEKLSEYGDFDARGNTIAHMQRGGNPTAKDRVMASKMGAYAVELLLAGKGGLAVGIQNNQLVNHNILDLFESKHDVEVSLDKLNEEISFK</sequence>
<organism>
    <name type="scientific">Lactiplantibacillus plantarum (strain ATCC BAA-793 / NCIMB 8826 / WCFS1)</name>
    <name type="common">Lactobacillus plantarum</name>
    <dbReference type="NCBI Taxonomy" id="220668"/>
    <lineage>
        <taxon>Bacteria</taxon>
        <taxon>Bacillati</taxon>
        <taxon>Bacillota</taxon>
        <taxon>Bacilli</taxon>
        <taxon>Lactobacillales</taxon>
        <taxon>Lactobacillaceae</taxon>
        <taxon>Lactiplantibacillus</taxon>
    </lineage>
</organism>
<reference key="1">
    <citation type="journal article" date="2003" name="Proc. Natl. Acad. Sci. U.S.A.">
        <title>Complete genome sequence of Lactobacillus plantarum WCFS1.</title>
        <authorList>
            <person name="Kleerebezem M."/>
            <person name="Boekhorst J."/>
            <person name="van Kranenburg R."/>
            <person name="Molenaar D."/>
            <person name="Kuipers O.P."/>
            <person name="Leer R."/>
            <person name="Tarchini R."/>
            <person name="Peters S.A."/>
            <person name="Sandbrink H.M."/>
            <person name="Fiers M.W.E.J."/>
            <person name="Stiekema W."/>
            <person name="Klein Lankhorst R.M."/>
            <person name="Bron P.A."/>
            <person name="Hoffer S.M."/>
            <person name="Nierop Groot M.N."/>
            <person name="Kerkhoven R."/>
            <person name="De Vries M."/>
            <person name="Ursing B."/>
            <person name="De Vos W.M."/>
            <person name="Siezen R.J."/>
        </authorList>
    </citation>
    <scope>NUCLEOTIDE SEQUENCE [LARGE SCALE GENOMIC DNA]</scope>
    <source>
        <strain>ATCC BAA-793 / NCIMB 8826 / WCFS1</strain>
    </source>
</reference>
<reference key="2">
    <citation type="journal article" date="2012" name="J. Bacteriol.">
        <title>Complete resequencing and reannotation of the Lactobacillus plantarum WCFS1 genome.</title>
        <authorList>
            <person name="Siezen R.J."/>
            <person name="Francke C."/>
            <person name="Renckens B."/>
            <person name="Boekhorst J."/>
            <person name="Wels M."/>
            <person name="Kleerebezem M."/>
            <person name="van Hijum S.A."/>
        </authorList>
    </citation>
    <scope>NUCLEOTIDE SEQUENCE [LARGE SCALE GENOMIC DNA]</scope>
    <scope>GENOME REANNOTATION</scope>
    <source>
        <strain>ATCC BAA-793 / NCIMB 8826 / WCFS1</strain>
    </source>
</reference>